<accession>Q2S2A5</accession>
<evidence type="ECO:0000255" key="1">
    <source>
        <dbReference type="HAMAP-Rule" id="MF_00087"/>
    </source>
</evidence>
<evidence type="ECO:0000256" key="2">
    <source>
        <dbReference type="SAM" id="MobiDB-lite"/>
    </source>
</evidence>
<evidence type="ECO:0000305" key="3"/>
<feature type="chain" id="PRO_0000335070" description="Glutamyl-tRNA reductase">
    <location>
        <begin position="1"/>
        <end position="479"/>
    </location>
</feature>
<feature type="region of interest" description="Disordered" evidence="2">
    <location>
        <begin position="417"/>
        <end position="455"/>
    </location>
</feature>
<feature type="active site" description="Nucleophile" evidence="1">
    <location>
        <position position="49"/>
    </location>
</feature>
<feature type="binding site" evidence="1">
    <location>
        <begin position="48"/>
        <end position="51"/>
    </location>
    <ligand>
        <name>substrate</name>
    </ligand>
</feature>
<feature type="binding site" evidence="1">
    <location>
        <position position="104"/>
    </location>
    <ligand>
        <name>substrate</name>
    </ligand>
</feature>
<feature type="binding site" evidence="1">
    <location>
        <begin position="109"/>
        <end position="111"/>
    </location>
    <ligand>
        <name>substrate</name>
    </ligand>
</feature>
<feature type="binding site" evidence="1">
    <location>
        <position position="115"/>
    </location>
    <ligand>
        <name>substrate</name>
    </ligand>
</feature>
<feature type="binding site" evidence="1">
    <location>
        <begin position="189"/>
        <end position="194"/>
    </location>
    <ligand>
        <name>NADP(+)</name>
        <dbReference type="ChEBI" id="CHEBI:58349"/>
    </ligand>
</feature>
<feature type="site" description="Important for activity" evidence="1">
    <location>
        <position position="94"/>
    </location>
</feature>
<protein>
    <recommendedName>
        <fullName evidence="1">Glutamyl-tRNA reductase</fullName>
        <shortName evidence="1">GluTR</shortName>
        <ecNumber evidence="1">1.2.1.70</ecNumber>
    </recommendedName>
</protein>
<gene>
    <name evidence="1" type="primary">hemA</name>
    <name type="ordered locus">SRU_1555</name>
</gene>
<comment type="function">
    <text evidence="1">Catalyzes the NADPH-dependent reduction of glutamyl-tRNA(Glu) to glutamate 1-semialdehyde (GSA).</text>
</comment>
<comment type="catalytic activity">
    <reaction evidence="1">
        <text>(S)-4-amino-5-oxopentanoate + tRNA(Glu) + NADP(+) = L-glutamyl-tRNA(Glu) + NADPH + H(+)</text>
        <dbReference type="Rhea" id="RHEA:12344"/>
        <dbReference type="Rhea" id="RHEA-COMP:9663"/>
        <dbReference type="Rhea" id="RHEA-COMP:9680"/>
        <dbReference type="ChEBI" id="CHEBI:15378"/>
        <dbReference type="ChEBI" id="CHEBI:57501"/>
        <dbReference type="ChEBI" id="CHEBI:57783"/>
        <dbReference type="ChEBI" id="CHEBI:58349"/>
        <dbReference type="ChEBI" id="CHEBI:78442"/>
        <dbReference type="ChEBI" id="CHEBI:78520"/>
        <dbReference type="EC" id="1.2.1.70"/>
    </reaction>
</comment>
<comment type="pathway">
    <text evidence="1">Porphyrin-containing compound metabolism; protoporphyrin-IX biosynthesis; 5-aminolevulinate from L-glutamyl-tRNA(Glu): step 1/2.</text>
</comment>
<comment type="subunit">
    <text evidence="1">Homodimer.</text>
</comment>
<comment type="domain">
    <text evidence="1">Possesses an unusual extended V-shaped dimeric structure with each monomer consisting of three distinct domains arranged along a curved 'spinal' alpha-helix. The N-terminal catalytic domain specifically recognizes the glutamate moiety of the substrate. The second domain is the NADPH-binding domain, and the third C-terminal domain is responsible for dimerization.</text>
</comment>
<comment type="miscellaneous">
    <text evidence="1">During catalysis, the active site Cys acts as a nucleophile attacking the alpha-carbonyl group of tRNA-bound glutamate with the formation of a thioester intermediate between enzyme and glutamate, and the concomitant release of tRNA(Glu). The thioester intermediate is finally reduced by direct hydride transfer from NADPH, to form the product GSA.</text>
</comment>
<comment type="similarity">
    <text evidence="1">Belongs to the glutamyl-tRNA reductase family.</text>
</comment>
<comment type="sequence caution" evidence="3">
    <conflict type="erroneous initiation">
        <sequence resource="EMBL-CDS" id="ABC43868"/>
    </conflict>
</comment>
<dbReference type="EC" id="1.2.1.70" evidence="1"/>
<dbReference type="EMBL" id="CP000159">
    <property type="protein sequence ID" value="ABC43868.1"/>
    <property type="status" value="ALT_INIT"/>
    <property type="molecule type" value="Genomic_DNA"/>
</dbReference>
<dbReference type="RefSeq" id="WP_103015525.1">
    <property type="nucleotide sequence ID" value="NC_007677.1"/>
</dbReference>
<dbReference type="RefSeq" id="YP_445676.1">
    <property type="nucleotide sequence ID" value="NC_007677.1"/>
</dbReference>
<dbReference type="SMR" id="Q2S2A5"/>
<dbReference type="STRING" id="309807.SRU_1555"/>
<dbReference type="EnsemblBacteria" id="ABC43868">
    <property type="protein sequence ID" value="ABC43868"/>
    <property type="gene ID" value="SRU_1555"/>
</dbReference>
<dbReference type="GeneID" id="83728468"/>
<dbReference type="KEGG" id="sru:SRU_1555"/>
<dbReference type="PATRIC" id="fig|309807.25.peg.1609"/>
<dbReference type="eggNOG" id="COG0373">
    <property type="taxonomic scope" value="Bacteria"/>
</dbReference>
<dbReference type="HOGENOM" id="CLU_035113_2_2_10"/>
<dbReference type="OrthoDB" id="110209at2"/>
<dbReference type="UniPathway" id="UPA00251">
    <property type="reaction ID" value="UER00316"/>
</dbReference>
<dbReference type="Proteomes" id="UP000008674">
    <property type="component" value="Chromosome"/>
</dbReference>
<dbReference type="GO" id="GO:0008883">
    <property type="term" value="F:glutamyl-tRNA reductase activity"/>
    <property type="evidence" value="ECO:0007669"/>
    <property type="project" value="UniProtKB-UniRule"/>
</dbReference>
<dbReference type="GO" id="GO:0050661">
    <property type="term" value="F:NADP binding"/>
    <property type="evidence" value="ECO:0007669"/>
    <property type="project" value="InterPro"/>
</dbReference>
<dbReference type="GO" id="GO:0019353">
    <property type="term" value="P:protoporphyrinogen IX biosynthetic process from glutamate"/>
    <property type="evidence" value="ECO:0007669"/>
    <property type="project" value="TreeGrafter"/>
</dbReference>
<dbReference type="CDD" id="cd05213">
    <property type="entry name" value="NAD_bind_Glutamyl_tRNA_reduct"/>
    <property type="match status" value="1"/>
</dbReference>
<dbReference type="FunFam" id="3.30.460.30:FF:000001">
    <property type="entry name" value="Glutamyl-tRNA reductase"/>
    <property type="match status" value="1"/>
</dbReference>
<dbReference type="Gene3D" id="3.30.460.30">
    <property type="entry name" value="Glutamyl-tRNA reductase, N-terminal domain"/>
    <property type="match status" value="1"/>
</dbReference>
<dbReference type="Gene3D" id="3.40.50.720">
    <property type="entry name" value="NAD(P)-binding Rossmann-like Domain"/>
    <property type="match status" value="1"/>
</dbReference>
<dbReference type="HAMAP" id="MF_00087">
    <property type="entry name" value="Glu_tRNA_reductase"/>
    <property type="match status" value="1"/>
</dbReference>
<dbReference type="InterPro" id="IPR000343">
    <property type="entry name" value="4pyrrol_synth_GluRdtase"/>
</dbReference>
<dbReference type="InterPro" id="IPR015896">
    <property type="entry name" value="4pyrrol_synth_GluRdtase_dimer"/>
</dbReference>
<dbReference type="InterPro" id="IPR015895">
    <property type="entry name" value="4pyrrol_synth_GluRdtase_N"/>
</dbReference>
<dbReference type="InterPro" id="IPR036453">
    <property type="entry name" value="GluRdtase_dimer_dom_sf"/>
</dbReference>
<dbReference type="InterPro" id="IPR036343">
    <property type="entry name" value="GluRdtase_N_sf"/>
</dbReference>
<dbReference type="InterPro" id="IPR036291">
    <property type="entry name" value="NAD(P)-bd_dom_sf"/>
</dbReference>
<dbReference type="InterPro" id="IPR006151">
    <property type="entry name" value="Shikm_DH/Glu-tRNA_Rdtase"/>
</dbReference>
<dbReference type="NCBIfam" id="TIGR01035">
    <property type="entry name" value="hemA"/>
    <property type="match status" value="1"/>
</dbReference>
<dbReference type="PANTHER" id="PTHR43013">
    <property type="entry name" value="GLUTAMYL-TRNA REDUCTASE"/>
    <property type="match status" value="1"/>
</dbReference>
<dbReference type="PANTHER" id="PTHR43013:SF1">
    <property type="entry name" value="GLUTAMYL-TRNA REDUCTASE"/>
    <property type="match status" value="1"/>
</dbReference>
<dbReference type="Pfam" id="PF00745">
    <property type="entry name" value="GlutR_dimer"/>
    <property type="match status" value="1"/>
</dbReference>
<dbReference type="Pfam" id="PF05201">
    <property type="entry name" value="GlutR_N"/>
    <property type="match status" value="1"/>
</dbReference>
<dbReference type="Pfam" id="PF01488">
    <property type="entry name" value="Shikimate_DH"/>
    <property type="match status" value="1"/>
</dbReference>
<dbReference type="PIRSF" id="PIRSF000445">
    <property type="entry name" value="4pyrrol_synth_GluRdtase"/>
    <property type="match status" value="1"/>
</dbReference>
<dbReference type="SUPFAM" id="SSF69742">
    <property type="entry name" value="Glutamyl tRNA-reductase catalytic, N-terminal domain"/>
    <property type="match status" value="1"/>
</dbReference>
<dbReference type="SUPFAM" id="SSF69075">
    <property type="entry name" value="Glutamyl tRNA-reductase dimerization domain"/>
    <property type="match status" value="1"/>
</dbReference>
<dbReference type="SUPFAM" id="SSF51735">
    <property type="entry name" value="NAD(P)-binding Rossmann-fold domains"/>
    <property type="match status" value="1"/>
</dbReference>
<sequence>MRFYAVGLNHECTSLEQTETFALSAEEQEALYANLSLSADAEVVVLSTCNRTEAYLYGTEADLRQVKALIGQGGGTRWPEETAFQERDEAAVRHLLQVTSGLRSVVLGERQIFAQVKAAYERAVDAGGIHSVMHRLFHTAFRAAKRVSSETGLGRGAASVSTAAVEMARQDLSEAGGEGLRNTEIVLVGAGKMGRLALEALADESLASLTVVNRSPDRAREVASPFGGDTEPWADRHRAVATADLALVATGASDPVLHAPALPAPDEATLVVDVAMPRNVDPAVDERPGYRLYDLDDLEAWTAEVRERRADAVPEAESICEELLEDFVTWVFHQQALQPAIQAIRSTFDTIREQEVDRHAHRTGMDREEVDRLTESIMQKLLAVPIVRLKNVDPESIDFVQGIELLHALFAPSDESDAGRSLAEAPDADTPDLGEAPSRCPYMTHDPGGDGTETEEVQKALRLSAAHQAASHSEEVRGG</sequence>
<organism>
    <name type="scientific">Salinibacter ruber (strain DSM 13855 / M31)</name>
    <dbReference type="NCBI Taxonomy" id="309807"/>
    <lineage>
        <taxon>Bacteria</taxon>
        <taxon>Pseudomonadati</taxon>
        <taxon>Rhodothermota</taxon>
        <taxon>Rhodothermia</taxon>
        <taxon>Rhodothermales</taxon>
        <taxon>Salinibacteraceae</taxon>
        <taxon>Salinibacter</taxon>
    </lineage>
</organism>
<name>HEM1_SALRD</name>
<reference key="1">
    <citation type="journal article" date="2005" name="Proc. Natl. Acad. Sci. U.S.A.">
        <title>The genome of Salinibacter ruber: convergence and gene exchange among hyperhalophilic bacteria and archaea.</title>
        <authorList>
            <person name="Mongodin E.F."/>
            <person name="Nelson K.E."/>
            <person name="Daugherty S."/>
            <person name="DeBoy R.T."/>
            <person name="Wister J."/>
            <person name="Khouri H."/>
            <person name="Weidman J."/>
            <person name="Walsh D.A."/>
            <person name="Papke R.T."/>
            <person name="Sanchez Perez G."/>
            <person name="Sharma A.K."/>
            <person name="Nesbo C.L."/>
            <person name="MacLeod D."/>
            <person name="Bapteste E."/>
            <person name="Doolittle W.F."/>
            <person name="Charlebois R.L."/>
            <person name="Legault B."/>
            <person name="Rodriguez-Valera F."/>
        </authorList>
    </citation>
    <scope>NUCLEOTIDE SEQUENCE [LARGE SCALE GENOMIC DNA]</scope>
    <source>
        <strain>DSM 13855 / CECT 5946 / M31</strain>
    </source>
</reference>
<proteinExistence type="inferred from homology"/>
<keyword id="KW-0521">NADP</keyword>
<keyword id="KW-0560">Oxidoreductase</keyword>
<keyword id="KW-0627">Porphyrin biosynthesis</keyword>
<keyword id="KW-1185">Reference proteome</keyword>